<sequence length="1255" mass="136579">MNGYAEFPPSPSNPTKEPVEPQPSQVPLQEDVDMSSGSSGHETNENCSTGRDSQGSDCDDSGKELGMLVEPPDARQSPDTFSLMMAKSEHNPSTSGCSSDQSSKVDTHKELIKTLKELKVHLPADKKAKGKASTLATLKYALRSVKQVKANEEYYQLLMSSEGHPCGADVPSYTVEEMESVTSEHIVKNADMFAVAVSLVSGKILYISDQVASIFHCKRDAFSDAKFVEFLAPHDVGVFHSFTSPYKLPLWSMCSGADSFTQECMEEKSFFCRVSVRKSHENEIRYHPFRMTPYLVKVRDQQGAESQLCCLLLAERVHSGYEAPRIPPEKRIFTTTHTPNCLFQDVDERAVPLLGYLPQDLIETPVLVQLHPSDRPLMLAIHKKILQSGGQPFDYSPIRFRARNGEYITLDTSWSSFINPWSRKISFIIGRHKVRVGPLNEDVFAAHPCTEEKALHPSIQELTEQIHRLLLQPVPHSGSSGYGSLGSNGSHEHLMSQTSSSDSNGHEDSRRRRAEICKNGNKTKNRSHYSHESGEQKKKSVTEMQTNPPAEKKAVPAMEKDSLGVSFPEELACKNQPTCSYQQISCLDSVIRYLESCNEAATLKRKCEFPANVPALRSSDKRKATVSPGPHAGEAEPPSRVNSRTGVGTHLTSLALPGKAESVASLTSQCSYSSTIVHVGDKKPQPELEMVEDAASGPESLDCLAGPALACGLSQEKEPFKKLGLTKEVLAAHTQKEEQSFLQKFKEIRKLSIFQSHCHYYLQERSKGQPSERTAPGLRNTSGIDSPWKKTGKNRKLKSKRVKPRDSSESTGSGGPVSARPPLVGLNATAWSPSDTSQSSCPAVPFPAPVPAAYSLPVFPAPGTVAAPPAPPHASFTVPAVPVDLQHQFAVQPPPFPAPLAPVMAFMLPSYSFPSGTPNLPQAFFPSQPQFPSHPTLTSEMASASQPEFPSRTSIPRQPCACPATRATPPSAMGRASPPLFQSRSSSPLQLNLLQLEEAPEGGTGAMGTTGATETAAVGADCKPGTSRDQQPKAPLTRDEPSDTQNSDALSTSSGLLNLLLNEDLCSASGSAASESLGSGSLGCDASPSGAGSSDTSHTSKYFGSIDSSENNHKAKMNTGMEESEHFIKCVLQDPIWLLMADADSSVMMTYQLPSRNLEAVLKEDREKLKLLQKLQPRFTESQKQELREVHQWMQTGGLPAAIDVAECVYCENKEKGNICIPYEEDIPSLGLSEVSDTKEDENGSPLNHRIEEQT</sequence>
<accession>O15055</accession>
<accession>A2I2P7</accession>
<accession>Q4ZG49</accession>
<accession>Q6DT41</accession>
<accession>Q9UQ45</accession>
<gene>
    <name type="primary">PER2</name>
    <name type="synonym">KIAA0347</name>
</gene>
<evidence type="ECO:0000250" key="1">
    <source>
        <dbReference type="UniProtKB" id="O54943"/>
    </source>
</evidence>
<evidence type="ECO:0000250" key="2">
    <source>
        <dbReference type="UniProtKB" id="Q9Z301"/>
    </source>
</evidence>
<evidence type="ECO:0000255" key="3">
    <source>
        <dbReference type="PROSITE-ProRule" id="PRU00140"/>
    </source>
</evidence>
<evidence type="ECO:0000256" key="4">
    <source>
        <dbReference type="SAM" id="MobiDB-lite"/>
    </source>
</evidence>
<evidence type="ECO:0000269" key="5">
    <source>
    </source>
</evidence>
<evidence type="ECO:0000269" key="6">
    <source>
    </source>
</evidence>
<evidence type="ECO:0000269" key="7">
    <source>
    </source>
</evidence>
<evidence type="ECO:0000269" key="8">
    <source>
    </source>
</evidence>
<evidence type="ECO:0000269" key="9">
    <source>
    </source>
</evidence>
<evidence type="ECO:0000269" key="10">
    <source>
    </source>
</evidence>
<evidence type="ECO:0000269" key="11">
    <source>
    </source>
</evidence>
<evidence type="ECO:0000269" key="12">
    <source>
    </source>
</evidence>
<evidence type="ECO:0000269" key="13">
    <source>
    </source>
</evidence>
<evidence type="ECO:0000303" key="14">
    <source ref="1"/>
</evidence>
<evidence type="ECO:0000305" key="15"/>
<evidence type="ECO:0007829" key="16">
    <source>
        <dbReference type="PDB" id="6OF7"/>
    </source>
</evidence>
<protein>
    <recommendedName>
        <fullName>Period circadian protein homolog 2</fullName>
        <shortName>hPER2</shortName>
    </recommendedName>
    <alternativeName>
        <fullName>Circadian clock protein PERIOD 2</fullName>
    </alternativeName>
</protein>
<feature type="chain" id="PRO_0000162630" description="Period circadian protein homolog 2">
    <location>
        <begin position="1"/>
        <end position="1255"/>
    </location>
</feature>
<feature type="domain" description="PAS 1" evidence="3">
    <location>
        <begin position="181"/>
        <end position="248"/>
    </location>
</feature>
<feature type="domain" description="PAS 2" evidence="3">
    <location>
        <begin position="321"/>
        <end position="387"/>
    </location>
</feature>
<feature type="domain" description="PAC">
    <location>
        <begin position="395"/>
        <end position="438"/>
    </location>
</feature>
<feature type="region of interest" description="Disordered" evidence="4">
    <location>
        <begin position="1"/>
        <end position="79"/>
    </location>
</feature>
<feature type="region of interest" description="Disordered" evidence="4">
    <location>
        <begin position="473"/>
        <end position="557"/>
    </location>
</feature>
<feature type="region of interest" description="Important for protein stability" evidence="2">
    <location>
        <begin position="480"/>
        <end position="484"/>
    </location>
</feature>
<feature type="region of interest" description="CSNK1E binding domain" evidence="1">
    <location>
        <begin position="512"/>
        <end position="717"/>
    </location>
</feature>
<feature type="region of interest" description="Disordered" evidence="4">
    <location>
        <begin position="617"/>
        <end position="646"/>
    </location>
</feature>
<feature type="region of interest" description="Disordered" evidence="4">
    <location>
        <begin position="764"/>
        <end position="838"/>
    </location>
</feature>
<feature type="region of interest" description="Interaction with PPARG" evidence="1">
    <location>
        <begin position="888"/>
        <end position="1071"/>
    </location>
</feature>
<feature type="region of interest" description="Disordered" evidence="4">
    <location>
        <begin position="931"/>
        <end position="985"/>
    </location>
</feature>
<feature type="region of interest" description="Disordered" evidence="4">
    <location>
        <begin position="1018"/>
        <end position="1050"/>
    </location>
</feature>
<feature type="region of interest" description="Disordered" evidence="4">
    <location>
        <begin position="1077"/>
        <end position="1106"/>
    </location>
</feature>
<feature type="region of interest" description="CRY binding domain" evidence="2">
    <location>
        <begin position="1155"/>
        <end position="1255"/>
    </location>
</feature>
<feature type="region of interest" description="Disordered" evidence="4">
    <location>
        <begin position="1231"/>
        <end position="1255"/>
    </location>
</feature>
<feature type="short sequence motif" description="Nuclear export signal 1" evidence="1">
    <location>
        <begin position="111"/>
        <end position="120"/>
    </location>
</feature>
<feature type="short sequence motif" description="LXXLL">
    <location>
        <begin position="308"/>
        <end position="312"/>
    </location>
</feature>
<feature type="short sequence motif" description="Nuclear export signal 2" evidence="1">
    <location>
        <begin position="462"/>
        <end position="471"/>
    </location>
</feature>
<feature type="short sequence motif" description="Nuclear localization signal" evidence="1">
    <location>
        <begin position="789"/>
        <end position="805"/>
    </location>
</feature>
<feature type="short sequence motif" description="Nuclear export signal 3" evidence="1">
    <location>
        <begin position="989"/>
        <end position="996"/>
    </location>
</feature>
<feature type="short sequence motif" description="LXXLL">
    <location>
        <begin position="1057"/>
        <end position="1061"/>
    </location>
</feature>
<feature type="compositionally biased region" description="Polar residues" evidence="4">
    <location>
        <begin position="35"/>
        <end position="56"/>
    </location>
</feature>
<feature type="compositionally biased region" description="Basic and acidic residues" evidence="4">
    <location>
        <begin position="504"/>
        <end position="516"/>
    </location>
</feature>
<feature type="compositionally biased region" description="Basic and acidic residues" evidence="4">
    <location>
        <begin position="529"/>
        <end position="541"/>
    </location>
</feature>
<feature type="compositionally biased region" description="Basic residues" evidence="4">
    <location>
        <begin position="790"/>
        <end position="803"/>
    </location>
</feature>
<feature type="compositionally biased region" description="Polar residues" evidence="4">
    <location>
        <begin position="829"/>
        <end position="838"/>
    </location>
</feature>
<feature type="compositionally biased region" description="Polar residues" evidence="4">
    <location>
        <begin position="936"/>
        <end position="956"/>
    </location>
</feature>
<feature type="compositionally biased region" description="Low complexity" evidence="4">
    <location>
        <begin position="959"/>
        <end position="972"/>
    </location>
</feature>
<feature type="compositionally biased region" description="Polar residues" evidence="4">
    <location>
        <begin position="1090"/>
        <end position="1106"/>
    </location>
</feature>
<feature type="modified residue" description="Phosphoserine" evidence="1">
    <location>
        <position position="527"/>
    </location>
</feature>
<feature type="modified residue" description="Phosphoserine" evidence="1">
    <location>
        <position position="530"/>
    </location>
</feature>
<feature type="modified residue" description="Phosphoserine" evidence="1">
    <location>
        <position position="533"/>
    </location>
</feature>
<feature type="modified residue" description="Phosphoserine" evidence="1">
    <location>
        <position position="540"/>
    </location>
</feature>
<feature type="modified residue" description="Phosphoserine" evidence="6">
    <location>
        <position position="662"/>
    </location>
</feature>
<feature type="modified residue" description="Phosphoserine" evidence="1">
    <location>
        <position position="696"/>
    </location>
</feature>
<feature type="modified residue" description="Phosphoserine" evidence="1">
    <location>
        <position position="700"/>
    </location>
</feature>
<feature type="modified residue" description="Phosphoserine" evidence="1">
    <location>
        <position position="714"/>
    </location>
</feature>
<feature type="modified residue" description="Phosphoserine" evidence="1">
    <location>
        <position position="766"/>
    </location>
</feature>
<feature type="modified residue" description="Phosphoserine" evidence="1">
    <location>
        <position position="771"/>
    </location>
</feature>
<feature type="modified residue" description="Phosphoserine" evidence="1">
    <location>
        <position position="945"/>
    </location>
</feature>
<feature type="modified residue" description="Phosphoserine" evidence="1">
    <location>
        <position position="977"/>
    </location>
</feature>
<feature type="modified residue" description="Phosphoserine" evidence="1">
    <location>
        <position position="1124"/>
    </location>
</feature>
<feature type="splice variant" id="VSP_021653" description="In isoform 2." evidence="14">
    <original>RAVPLLGYLPQDLIETPVLVQLHPSDRPLMLAIHKKILQSGGQPFDYSPIRFRARN</original>
    <variation>SPAVRRAAFRLFSHSVSRPERRVHHVGHQLVQLHQPMEQENLLHHWEAQSQGGPFE</variation>
    <location>
        <begin position="349"/>
        <end position="404"/>
    </location>
</feature>
<feature type="splice variant" id="VSP_021654" description="In isoform 2." evidence="14">
    <location>
        <begin position="405"/>
        <end position="1255"/>
    </location>
</feature>
<feature type="sequence variant" id="VAR_051575" description="In dbSNP:rs35572922.">
    <original>A</original>
    <variation>S</variation>
    <location>
        <position position="5"/>
    </location>
</feature>
<feature type="sequence variant" id="VAR_029080" description="In FASPS1; reduced in vitro phosphorylation by CSNK1E; dbSNP:rs121908635." evidence="6">
    <original>S</original>
    <variation>G</variation>
    <location>
        <position position="662"/>
    </location>
</feature>
<feature type="sequence variant" id="VAR_051576" description="In dbSNP:rs4429421.">
    <original>V</original>
    <variation>I</variation>
    <location>
        <position position="729"/>
    </location>
</feature>
<feature type="sequence variant" id="VAR_036041" description="In a breast cancer sample; somatic mutation." evidence="8">
    <original>L</original>
    <variation>V</variation>
    <location>
        <position position="823"/>
    </location>
</feature>
<feature type="sequence variant" id="VAR_051577" description="In dbSNP:rs35333999.">
    <original>V</original>
    <variation>I</variation>
    <location>
        <position position="903"/>
    </location>
</feature>
<feature type="sequence variant" id="VAR_051578" description="In dbSNP:rs35998480.">
    <original>F</original>
    <variation>Y</variation>
    <location>
        <position position="949"/>
    </location>
</feature>
<feature type="sequence variant" id="VAR_024558" description="In dbSNP:rs934945.">
    <original>G</original>
    <variation>E</variation>
    <location>
        <position position="1244"/>
    </location>
</feature>
<feature type="mutagenesis site" description="Restores CSNK1E-dependent phosphorylation of variant G-662." evidence="6">
    <original>S</original>
    <variation>D</variation>
    <location>
        <position position="662"/>
    </location>
</feature>
<feature type="helix" evidence="16">
    <location>
        <begin position="1136"/>
        <end position="1140"/>
    </location>
</feature>
<feature type="turn" evidence="16">
    <location>
        <begin position="1145"/>
        <end position="1149"/>
    </location>
</feature>
<feature type="helix" evidence="16">
    <location>
        <begin position="1158"/>
        <end position="1171"/>
    </location>
</feature>
<feature type="helix" evidence="16">
    <location>
        <begin position="1181"/>
        <end position="1188"/>
    </location>
</feature>
<feature type="helix" evidence="16">
    <location>
        <begin position="1192"/>
        <end position="1196"/>
    </location>
</feature>
<feature type="turn" evidence="16">
    <location>
        <begin position="1201"/>
        <end position="1203"/>
    </location>
</feature>
<comment type="function">
    <text evidence="1">Transcriptional repressor which forms a core component of the circadian clock. The circadian clock, an internal time-keeping system, regulates various physiological processes through the generation of approximately 24 hour circadian rhythms in gene expression, which are translated into rhythms in metabolism and behavior. It is derived from the Latin roots 'circa' (about) and 'diem' (day) and acts as an important regulator of a wide array of physiological functions including metabolism, sleep, body temperature, blood pressure, endocrine, immune, cardiovascular, and renal function. Consists of two major components: the central clock, residing in the suprachiasmatic nucleus (SCN) of the brain, and the peripheral clocks that are present in nearly every tissue and organ system. Both the central and peripheral clocks can be reset by environmental cues, also known as Zeitgebers (German for 'timegivers'). The predominant Zeitgeber for the central clock is light, which is sensed by retina and signals directly to the SCN. The central clock entrains the peripheral clocks through neuronal and hormonal signals, body temperature and feeding-related cues, aligning all clocks with the external light/dark cycle. Circadian rhythms allow an organism to achieve temporal homeostasis with its environment at the molecular level by regulating gene expression to create a peak of protein expression once every 24 hours to control when a particular physiological process is most active with respect to the solar day. Transcription and translation of core clock components (CLOCK, NPAS2, BMAL1, BMAL2, PER1, PER2, PER3, CRY1 and CRY2) plays a critical role in rhythm generation, whereas delays imposed by post-translational modifications (PTMs) are important for determining the period (tau) of the rhythms (tau refers to the period of a rhythm and is the length, in time, of one complete cycle). A diurnal rhythm is synchronized with the day/night cycle, while the ultradian and infradian rhythms have a period shorter and longer than 24 hours, respectively. Disruptions in the circadian rhythms contribute to the pathology of cardiovascular diseases, cancer, metabolic syndrome and aging. A transcription/translation feedback loop (TTFL) forms the core of the molecular circadian clock mechanism. Transcription factors, CLOCK or NPAS2 and BMAL1 or BMAL2, form the positive limb of the feedback loop, act in the form of a heterodimer and activate the transcription of core clock genes and clock-controlled genes (involved in key metabolic processes), harboring E-box elements (5'-CACGTG-3') within their promoters. The core clock genes: PER1/2/3 and CRY1/2 which are transcriptional repressors form the negative limb of the feedback loop and interact with the CLOCK|NPAS2-BMAL1|BMAL2 heterodimer inhibiting its activity and thereby negatively regulating their own expression. This heterodimer also activates nuclear receptors NR1D1/2 and RORA/B/G, which form a second feedback loop and which activate and repress BMAL1 transcription, respectively. PER1 and PER2 proteins transport CRY1 and CRY2 into the nucleus with appropriate circadian timing, but also contribute directly to repression of clock-controlled target genes through interaction with several classes of RNA-binding proteins, helicases and others transcriptional repressors. PER appears to regulate circadian control of transcription by at least three different modes. First, interacts directly with the CLOCK-BMAL1 at the tail end of the nascent transcript peak to recruit complexes containing the SIN3-HDAC that remodel chromatin to repress transcription. Second, brings H3K9 methyltransferases such as SUV39H1 and SUV39H2 to the E-box elements of the circadian target genes, like PER2 itself or PER1. The recruitment of each repressive modifier to the DNA seems to be very precisely temporally orchestrated by the large PER complex, the deacetylases acting before than the methyltransferases. Additionally, large PER complexes are also recruited to the target genes 3' termination site through interactions with RNA-binding proteins and helicases that may play a role in transcription termination to regulate transcription independently of CLOCK-BMAL1 interactions. Recruitment of large PER complexes to the elongating polymerase at PER and CRY termination sites inhibited SETX action, impeding RNA polymerase II release and thereby repressing transcriptional reinitiation. May propagate clock information to metabolic pathways via the interaction with nuclear receptors. Coactivator of PPARA and corepressor of NR1D1, binds rhythmically at the promoter of nuclear receptors target genes like BMAL1 or G6PC1. Directly and specifically represses PPARG proadipogenic activity by blocking PPARG recruitment to target promoters and thereby inhibiting transcriptional activation. Required for fatty acid and lipid metabolism, is involved as well in the regulation of circulating insulin levels. Plays an important role in the maintenance of cardiovascular functions through the regulation of NO and vasodilatatory prostaglandins production in aortas. Controls circadian glutamate uptake in synaptic vesicles through the regulation of VGLUT1 expression. May also be involved in the regulation of inflammatory processes. Represses the CLOCK-BMAL1 induced transcription of BHLHE40/DEC1 and ATF4. Negatively regulates the formation of the TIMELESS-CRY1 complex by competing with TIMELESS for binding to CRY1.</text>
</comment>
<comment type="subunit">
    <text evidence="1 5 9 11 12">Homodimer. Component of the circadian core oscillator, which includes the CRY proteins, CLOCK or NPAS2, BMAL1 or BMAL2, CSNK1D and/or CSNK1E, TIMELESS, and the PER proteins. Interacts with CLOCK-BMAL1 (off DNA). Interacts with BMAL2. Interacts directly with PER1 and PER3, and through a C-terminal domain, with CRY1 and CRY2. Interacts (via PAS 2 domain) with TIMELESS (PubMed:31138685). Interacts with NFIL3. Different large complexes have been identified with different repressive functions. The core of PER complexes is composed of at least PER1, PER2, PER3, CRY1, CRY2, CSNK1D and/or CSNK1E. The large PER complex involved in the repression of transcriptional termination is composed of at least PER2, CDK9, DDX5, DHX9, NCBP1 and POLR2A (active). The large PER complex involved in the histone deacetylation is composed of at least HDAC1, PER2, SFPQ and SIN3A. The large PER complex involved in the histone methylation is composed of at least PER2, CBX3, TRIM28, SUV39H1 and/or SUV39H2; CBX3 mediates the formation of the complex. Interacts with SETX; the interaction inhibits termination of circadian target genes. Interacts with the nuclear receptors HNF4A, NR1D1, NR4A2, RORA, PPARA, PPARG and THRA; the interaction with at least PPARG is ligand dependent. Interacts with PML. Interacts (phosphorylated) with BTRC and FBXW11; the interactions trigger proteasomal degradation. Interacts with NONO and SFPQ. Interacts with CAVIN3 (By similarity). Interacts with MAGEL2 (By similarity). Interacts with MAP1LC3B (By similarity). Interacts with HNF4A (PubMed:30530698).</text>
</comment>
<comment type="interaction">
    <interactant intactId="EBI-1054296">
        <id>O15055</id>
    </interactant>
    <interactant intactId="EBI-751621">
        <id>P48730</id>
        <label>CSNK1D</label>
    </interactant>
    <organismsDiffer>false</organismsDiffer>
    <experiments>6</experiments>
</comment>
<comment type="interaction">
    <interactant intactId="EBI-1054296">
        <id>O15055</id>
    </interactant>
    <interactant intactId="EBI-749343">
        <id>P49674</id>
        <label>CSNK1E</label>
    </interactant>
    <organismsDiffer>false</organismsDiffer>
    <experiments>9</experiments>
</comment>
<comment type="interaction">
    <interactant intactId="EBI-1054296">
        <id>O15055</id>
    </interactant>
    <interactant intactId="EBI-742350">
        <id>Q14241</id>
        <label>ELOA</label>
    </interactant>
    <organismsDiffer>false</organismsDiffer>
    <experiments>3</experiments>
</comment>
<comment type="interaction">
    <interactant intactId="EBI-1054296">
        <id>O15055</id>
    </interactant>
    <interactant intactId="EBI-739546">
        <id>Q96PV6</id>
        <label>LENG8</label>
    </interactant>
    <organismsDiffer>false</organismsDiffer>
    <experiments>3</experiments>
</comment>
<comment type="interaction">
    <interactant intactId="EBI-1054296">
        <id>O15055</id>
    </interactant>
    <interactant intactId="EBI-2798728">
        <id>P61968</id>
        <label>LMO4</label>
    </interactant>
    <organismsDiffer>false</organismsDiffer>
    <experiments>3</experiments>
</comment>
<comment type="interaction">
    <interactant intactId="EBI-1054296">
        <id>O15055</id>
    </interactant>
    <interactant intactId="EBI-744248">
        <id>P40692</id>
        <label>MLH1</label>
    </interactant>
    <organismsDiffer>false</organismsDiffer>
    <experiments>3</experiments>
</comment>
<comment type="interaction">
    <interactant intactId="EBI-1054296">
        <id>O15055</id>
    </interactant>
    <interactant intactId="EBI-10178671">
        <id>J3QSH9</id>
        <label>PER1</label>
    </interactant>
    <organismsDiffer>false</organismsDiffer>
    <experiments>3</experiments>
</comment>
<comment type="interaction">
    <interactant intactId="EBI-1054296">
        <id>O15055</id>
    </interactant>
    <interactant intactId="EBI-295890">
        <id>P29590</id>
        <label>PML</label>
    </interactant>
    <organismsDiffer>false</organismsDiffer>
    <experiments>3</experiments>
</comment>
<comment type="interaction">
    <interactant intactId="EBI-1054296">
        <id>O15055</id>
    </interactant>
    <interactant intactId="EBI-356983">
        <id>P11441</id>
        <label>UBL4A</label>
    </interactant>
    <organismsDiffer>false</organismsDiffer>
    <experiments>3</experiments>
</comment>
<comment type="subcellular location">
    <molecule>Isoform 1</molecule>
    <subcellularLocation>
        <location evidence="9">Nucleus</location>
    </subcellularLocation>
    <subcellularLocation>
        <location evidence="1">Cytoplasm</location>
    </subcellularLocation>
    <subcellularLocation>
        <location evidence="1">Cytoplasm</location>
        <location evidence="1">Perinuclear region</location>
    </subcellularLocation>
    <text evidence="1">Nucleocytoplasmic shuttling is effected by interaction with other circadian core oscillator proteins and/or by phosphorylation. Translocate to the nucleus after phosphorylation by CSNK1D or CSNK1E. Also translocated to the nucleus by CRY1 or CRY2. PML regulates its nuclear localization.</text>
</comment>
<comment type="subcellular location">
    <molecule>Isoform 2</molecule>
    <subcellularLocation>
        <location evidence="10">Nucleus</location>
        <location evidence="10">Nucleolus</location>
    </subcellularLocation>
</comment>
<comment type="alternative products">
    <event type="alternative splicing"/>
    <isoform>
        <id>O15055-1</id>
        <name>1</name>
        <sequence type="displayed"/>
    </isoform>
    <isoform>
        <id>O15055-2</id>
        <name>2</name>
        <name>PER2S</name>
        <sequence type="described" ref="VSP_021653 VSP_021654"/>
    </isoform>
</comment>
<comment type="tissue specificity">
    <text evidence="13">Widely expressed. Found in heart, brain, placenta, lung, liver, skeleatal muscle, kidney and pancreas. High levels in skeletal muscle and pancreas. Low levels in lung. Isoform 2 is expressed in keratinocytes (at protein level).</text>
</comment>
<comment type="induction">
    <text evidence="7">Oscillates diurnally. Rhythmic levels are critical for the generation of circadian rhythms in central as well as peripheral clocks. Targeted degradation of PER and CRY proteins enables the reactivation of CLOCK-BMAL1, thus initiating a new circadian transcriptional cycle with an intrinsic period of 24 hours.</text>
</comment>
<comment type="PTM">
    <text evidence="1">Acetylated. Deacetylated by SIRT1, resulting in decreased protein stability. Deacetylated by SIRT6, preventing its degradation by the proteasome, resulting in increased protein stability.</text>
</comment>
<comment type="PTM">
    <text evidence="5 6">Phosphorylated by CSNK1E and CSNK1D. Phosphorylation results in PER2 protein degradation. May be dephosphorylated by PP1.</text>
</comment>
<comment type="PTM">
    <text evidence="1">Ubiquitinated, leading to its proteasomal degradation. Ubiquitination may be inhibited by CRY1.</text>
</comment>
<comment type="disease" evidence="6">
    <disease id="DI-01548">
        <name>Advanced sleep phase syndrome, familial, 1</name>
        <acronym>FASPS1</acronym>
        <description>An autosomal dominant disorder characterized by very early sleep onset and offset. Individuals are 'morning larks' with a 4 hours advance of the sleep, temperature and melatonin rhythms.</description>
        <dbReference type="MIM" id="604348"/>
    </disease>
    <text>The disease is caused by variants affecting the gene represented in this entry.</text>
</comment>
<comment type="sequence caution" evidence="15">
    <conflict type="erroneous initiation">
        <sequence resource="EMBL-CDS" id="BAA20804"/>
    </conflict>
    <text>Extended N-terminus.</text>
</comment>
<organism>
    <name type="scientific">Homo sapiens</name>
    <name type="common">Human</name>
    <dbReference type="NCBI Taxonomy" id="9606"/>
    <lineage>
        <taxon>Eukaryota</taxon>
        <taxon>Metazoa</taxon>
        <taxon>Chordata</taxon>
        <taxon>Craniata</taxon>
        <taxon>Vertebrata</taxon>
        <taxon>Euteleostomi</taxon>
        <taxon>Mammalia</taxon>
        <taxon>Eutheria</taxon>
        <taxon>Euarchontoglires</taxon>
        <taxon>Primates</taxon>
        <taxon>Haplorrhini</taxon>
        <taxon>Catarrhini</taxon>
        <taxon>Hominidae</taxon>
        <taxon>Homo</taxon>
    </lineage>
</organism>
<keyword id="KW-0002">3D-structure</keyword>
<keyword id="KW-0007">Acetylation</keyword>
<keyword id="KW-0025">Alternative splicing</keyword>
<keyword id="KW-0090">Biological rhythms</keyword>
<keyword id="KW-0963">Cytoplasm</keyword>
<keyword id="KW-0225">Disease variant</keyword>
<keyword id="KW-0539">Nucleus</keyword>
<keyword id="KW-0597">Phosphoprotein</keyword>
<keyword id="KW-1267">Proteomics identification</keyword>
<keyword id="KW-1185">Reference proteome</keyword>
<keyword id="KW-0677">Repeat</keyword>
<keyword id="KW-0804">Transcription</keyword>
<keyword id="KW-0805">Transcription regulation</keyword>
<keyword id="KW-0832">Ubl conjugation</keyword>
<dbReference type="EMBL" id="AB012614">
    <property type="protein sequence ID" value="BAA83709.1"/>
    <property type="molecule type" value="mRNA"/>
</dbReference>
<dbReference type="EMBL" id="EF015905">
    <property type="protein sequence ID" value="ABM64216.1"/>
    <property type="molecule type" value="Genomic_DNA"/>
</dbReference>
<dbReference type="EMBL" id="AB002345">
    <property type="protein sequence ID" value="BAA20804.2"/>
    <property type="status" value="ALT_INIT"/>
    <property type="molecule type" value="mRNA"/>
</dbReference>
<dbReference type="EMBL" id="AC012485">
    <property type="protein sequence ID" value="AAX88976.1"/>
    <property type="molecule type" value="Genomic_DNA"/>
</dbReference>
<dbReference type="EMBL" id="CH471063">
    <property type="protein sequence ID" value="EAW71155.1"/>
    <property type="molecule type" value="Genomic_DNA"/>
</dbReference>
<dbReference type="EMBL" id="AY647991">
    <property type="protein sequence ID" value="AAT68170.1"/>
    <property type="molecule type" value="Genomic_DNA"/>
</dbReference>
<dbReference type="CCDS" id="CCDS2528.1">
    <molecule id="O15055-1"/>
</dbReference>
<dbReference type="RefSeq" id="NP_073728.1">
    <molecule id="O15055-1"/>
    <property type="nucleotide sequence ID" value="NM_022817.3"/>
</dbReference>
<dbReference type="RefSeq" id="XP_005246168.1">
    <molecule id="O15055-1"/>
    <property type="nucleotide sequence ID" value="XM_005246111.5"/>
</dbReference>
<dbReference type="RefSeq" id="XP_006712887.1">
    <molecule id="O15055-1"/>
    <property type="nucleotide sequence ID" value="XM_006712824.5"/>
</dbReference>
<dbReference type="RefSeq" id="XP_047302187.1">
    <molecule id="O15055-1"/>
    <property type="nucleotide sequence ID" value="XM_047446231.1"/>
</dbReference>
<dbReference type="RefSeq" id="XP_047302188.1">
    <molecule id="O15055-1"/>
    <property type="nucleotide sequence ID" value="XM_047446232.1"/>
</dbReference>
<dbReference type="RefSeq" id="XP_054200370.1">
    <molecule id="O15055-1"/>
    <property type="nucleotide sequence ID" value="XM_054344395.1"/>
</dbReference>
<dbReference type="RefSeq" id="XP_054200371.1">
    <molecule id="O15055-1"/>
    <property type="nucleotide sequence ID" value="XM_054344396.1"/>
</dbReference>
<dbReference type="PDB" id="6OF7">
    <property type="method" value="X-ray"/>
    <property type="resolution" value="3.11 A"/>
    <property type="chains" value="B=1093-1212"/>
</dbReference>
<dbReference type="PDB" id="8D7M">
    <property type="method" value="X-ray"/>
    <property type="resolution" value="2.25 A"/>
    <property type="chains" value="C/D=658-667"/>
</dbReference>
<dbReference type="PDB" id="8D7N">
    <property type="method" value="X-ray"/>
    <property type="resolution" value="1.66 A"/>
    <property type="chains" value="C/D=658-669"/>
</dbReference>
<dbReference type="PDB" id="8D7O">
    <property type="method" value="X-ray"/>
    <property type="resolution" value="1.65 A"/>
    <property type="chains" value="C/D=658-673"/>
</dbReference>
<dbReference type="PDBsum" id="6OF7"/>
<dbReference type="PDBsum" id="8D7M"/>
<dbReference type="PDBsum" id="8D7N"/>
<dbReference type="PDBsum" id="8D7O"/>
<dbReference type="SMR" id="O15055"/>
<dbReference type="BioGRID" id="114387">
    <property type="interactions" value="153"/>
</dbReference>
<dbReference type="ComplexPortal" id="CPX-3219">
    <property type="entry name" value="Cry1-Per2 complex"/>
</dbReference>
<dbReference type="ComplexPortal" id="CPX-3220">
    <property type="entry name" value="CRY2-PER2 complex"/>
</dbReference>
<dbReference type="DIP" id="DIP-38051N"/>
<dbReference type="FunCoup" id="O15055">
    <property type="interactions" value="2408"/>
</dbReference>
<dbReference type="IntAct" id="O15055">
    <property type="interactions" value="40"/>
</dbReference>
<dbReference type="STRING" id="9606.ENSP00000254657"/>
<dbReference type="BindingDB" id="O15055"/>
<dbReference type="ChEMBL" id="CHEMBL3751648"/>
<dbReference type="GlyCosmos" id="O15055">
    <property type="glycosylation" value="10 sites, 1 glycan"/>
</dbReference>
<dbReference type="GlyGen" id="O15055">
    <property type="glycosylation" value="10 sites, 1 O-linked glycan (10 sites)"/>
</dbReference>
<dbReference type="iPTMnet" id="O15055"/>
<dbReference type="PhosphoSitePlus" id="O15055"/>
<dbReference type="BioMuta" id="PER2"/>
<dbReference type="jPOST" id="O15055"/>
<dbReference type="MassIVE" id="O15055"/>
<dbReference type="PaxDb" id="9606-ENSP00000254657"/>
<dbReference type="PeptideAtlas" id="O15055"/>
<dbReference type="ProteomicsDB" id="48405">
    <molecule id="O15055-1"/>
</dbReference>
<dbReference type="ProteomicsDB" id="48406">
    <molecule id="O15055-2"/>
</dbReference>
<dbReference type="Antibodypedia" id="34500">
    <property type="antibodies" value="408 antibodies from 35 providers"/>
</dbReference>
<dbReference type="DNASU" id="8864"/>
<dbReference type="Ensembl" id="ENST00000254657.8">
    <molecule id="O15055-1"/>
    <property type="protein sequence ID" value="ENSP00000254657.3"/>
    <property type="gene ID" value="ENSG00000132326.13"/>
</dbReference>
<dbReference type="Ensembl" id="ENST00000707129.1">
    <molecule id="O15055-1"/>
    <property type="protein sequence ID" value="ENSP00000516757.1"/>
    <property type="gene ID" value="ENSG00000132326.13"/>
</dbReference>
<dbReference type="Ensembl" id="ENST00000707130.1">
    <molecule id="O15055-1"/>
    <property type="protein sequence ID" value="ENSP00000516758.1"/>
    <property type="gene ID" value="ENSG00000132326.13"/>
</dbReference>
<dbReference type="GeneID" id="8864"/>
<dbReference type="KEGG" id="hsa:8864"/>
<dbReference type="MANE-Select" id="ENST00000254657.8">
    <property type="protein sequence ID" value="ENSP00000254657.3"/>
    <property type="RefSeq nucleotide sequence ID" value="NM_022817.3"/>
    <property type="RefSeq protein sequence ID" value="NP_073728.1"/>
</dbReference>
<dbReference type="UCSC" id="uc002vyc.4">
    <molecule id="O15055-1"/>
    <property type="organism name" value="human"/>
</dbReference>
<dbReference type="AGR" id="HGNC:8846"/>
<dbReference type="CTD" id="8864"/>
<dbReference type="DisGeNET" id="8864"/>
<dbReference type="GeneCards" id="PER2"/>
<dbReference type="HGNC" id="HGNC:8846">
    <property type="gene designation" value="PER2"/>
</dbReference>
<dbReference type="HPA" id="ENSG00000132326">
    <property type="expression patterns" value="Low tissue specificity"/>
</dbReference>
<dbReference type="MalaCards" id="PER2"/>
<dbReference type="MIM" id="603426">
    <property type="type" value="gene"/>
</dbReference>
<dbReference type="MIM" id="604348">
    <property type="type" value="phenotype"/>
</dbReference>
<dbReference type="neXtProt" id="NX_O15055"/>
<dbReference type="OpenTargets" id="ENSG00000132326"/>
<dbReference type="Orphanet" id="164736">
    <property type="disease" value="Familial advanced sleep-phase syndrome"/>
</dbReference>
<dbReference type="PharmGKB" id="PA33185"/>
<dbReference type="VEuPathDB" id="HostDB:ENSG00000132326"/>
<dbReference type="eggNOG" id="KOG3753">
    <property type="taxonomic scope" value="Eukaryota"/>
</dbReference>
<dbReference type="GeneTree" id="ENSGT00940000156342"/>
<dbReference type="HOGENOM" id="CLU_006667_0_0_1"/>
<dbReference type="InParanoid" id="O15055"/>
<dbReference type="OMA" id="ENCSMGR"/>
<dbReference type="OrthoDB" id="7788983at2759"/>
<dbReference type="PAN-GO" id="O15055">
    <property type="GO annotations" value="7 GO annotations based on evolutionary models"/>
</dbReference>
<dbReference type="PhylomeDB" id="O15055"/>
<dbReference type="TreeFam" id="TF318445"/>
<dbReference type="PathwayCommons" id="O15055"/>
<dbReference type="Reactome" id="R-HSA-400253">
    <property type="pathway name" value="Circadian Clock"/>
</dbReference>
<dbReference type="SignaLink" id="O15055"/>
<dbReference type="SIGNOR" id="O15055"/>
<dbReference type="BioGRID-ORCS" id="8864">
    <property type="hits" value="17 hits in 1157 CRISPR screens"/>
</dbReference>
<dbReference type="CD-CODE" id="91857CE7">
    <property type="entry name" value="Nucleolus"/>
</dbReference>
<dbReference type="ChiTaRS" id="PER2">
    <property type="organism name" value="human"/>
</dbReference>
<dbReference type="GeneWiki" id="PER2"/>
<dbReference type="GenomeRNAi" id="8864"/>
<dbReference type="Pharos" id="O15055">
    <property type="development level" value="Tchem"/>
</dbReference>
<dbReference type="PRO" id="PR:O15055"/>
<dbReference type="Proteomes" id="UP000005640">
    <property type="component" value="Chromosome 2"/>
</dbReference>
<dbReference type="RNAct" id="O15055">
    <property type="molecule type" value="protein"/>
</dbReference>
<dbReference type="Bgee" id="ENSG00000132326">
    <property type="expression patterns" value="Expressed in oocyte and 214 other cell types or tissues"/>
</dbReference>
<dbReference type="ExpressionAtlas" id="O15055">
    <property type="expression patterns" value="baseline and differential"/>
</dbReference>
<dbReference type="GO" id="GO:1990512">
    <property type="term" value="C:Cry-Per complex"/>
    <property type="evidence" value="ECO:0000266"/>
    <property type="project" value="ComplexPortal"/>
</dbReference>
<dbReference type="GO" id="GO:0005737">
    <property type="term" value="C:cytoplasm"/>
    <property type="evidence" value="ECO:0000318"/>
    <property type="project" value="GO_Central"/>
</dbReference>
<dbReference type="GO" id="GO:0005829">
    <property type="term" value="C:cytosol"/>
    <property type="evidence" value="ECO:0000314"/>
    <property type="project" value="HPA"/>
</dbReference>
<dbReference type="GO" id="GO:0005730">
    <property type="term" value="C:nucleolus"/>
    <property type="evidence" value="ECO:0007669"/>
    <property type="project" value="UniProtKB-SubCell"/>
</dbReference>
<dbReference type="GO" id="GO:0005654">
    <property type="term" value="C:nucleoplasm"/>
    <property type="evidence" value="ECO:0000314"/>
    <property type="project" value="HPA"/>
</dbReference>
<dbReference type="GO" id="GO:0005634">
    <property type="term" value="C:nucleus"/>
    <property type="evidence" value="ECO:0000314"/>
    <property type="project" value="UniProtKB"/>
</dbReference>
<dbReference type="GO" id="GO:0048471">
    <property type="term" value="C:perinuclear region of cytoplasm"/>
    <property type="evidence" value="ECO:0007669"/>
    <property type="project" value="UniProtKB-SubCell"/>
</dbReference>
<dbReference type="GO" id="GO:0000976">
    <property type="term" value="F:transcription cis-regulatory region binding"/>
    <property type="evidence" value="ECO:0000250"/>
    <property type="project" value="UniProtKB"/>
</dbReference>
<dbReference type="GO" id="GO:0003713">
    <property type="term" value="F:transcription coactivator activity"/>
    <property type="evidence" value="ECO:0000250"/>
    <property type="project" value="UniProtKB"/>
</dbReference>
<dbReference type="GO" id="GO:0001222">
    <property type="term" value="F:transcription corepressor binding"/>
    <property type="evidence" value="ECO:0000318"/>
    <property type="project" value="GO_Central"/>
</dbReference>
<dbReference type="GO" id="GO:0006338">
    <property type="term" value="P:chromatin remodeling"/>
    <property type="evidence" value="ECO:0000250"/>
    <property type="project" value="UniProtKB"/>
</dbReference>
<dbReference type="GO" id="GO:0032922">
    <property type="term" value="P:circadian regulation of gene expression"/>
    <property type="evidence" value="ECO:0000250"/>
    <property type="project" value="UniProtKB"/>
</dbReference>
<dbReference type="GO" id="GO:0007623">
    <property type="term" value="P:circadian rhythm"/>
    <property type="evidence" value="ECO:0000304"/>
    <property type="project" value="ProtInc"/>
</dbReference>
<dbReference type="GO" id="GO:0043153">
    <property type="term" value="P:entrainment of circadian clock by photoperiod"/>
    <property type="evidence" value="ECO:0000318"/>
    <property type="project" value="GO_Central"/>
</dbReference>
<dbReference type="GO" id="GO:0006631">
    <property type="term" value="P:fatty acid metabolic process"/>
    <property type="evidence" value="ECO:0000250"/>
    <property type="project" value="UniProtKB"/>
</dbReference>
<dbReference type="GO" id="GO:0006094">
    <property type="term" value="P:gluconeogenesis"/>
    <property type="evidence" value="ECO:0000250"/>
    <property type="project" value="UniProtKB"/>
</dbReference>
<dbReference type="GO" id="GO:0005978">
    <property type="term" value="P:glycogen biosynthetic process"/>
    <property type="evidence" value="ECO:0000250"/>
    <property type="project" value="UniProtKB"/>
</dbReference>
<dbReference type="GO" id="GO:0019249">
    <property type="term" value="P:lactate biosynthetic process"/>
    <property type="evidence" value="ECO:0000250"/>
    <property type="project" value="UniProtKB"/>
</dbReference>
<dbReference type="GO" id="GO:0042754">
    <property type="term" value="P:negative regulation of circadian rhythm"/>
    <property type="evidence" value="ECO:0000250"/>
    <property type="project" value="UniProtKB"/>
</dbReference>
<dbReference type="GO" id="GO:0045892">
    <property type="term" value="P:negative regulation of DNA-templated transcription"/>
    <property type="evidence" value="ECO:0000250"/>
    <property type="project" value="UniProtKB"/>
</dbReference>
<dbReference type="GO" id="GO:0070345">
    <property type="term" value="P:negative regulation of fat cell proliferation"/>
    <property type="evidence" value="ECO:0000250"/>
    <property type="project" value="UniProtKB"/>
</dbReference>
<dbReference type="GO" id="GO:0031397">
    <property type="term" value="P:negative regulation of protein ubiquitination"/>
    <property type="evidence" value="ECO:0000250"/>
    <property type="project" value="UniProtKB"/>
</dbReference>
<dbReference type="GO" id="GO:0000122">
    <property type="term" value="P:negative regulation of transcription by RNA polymerase II"/>
    <property type="evidence" value="ECO:0000250"/>
    <property type="project" value="UniProtKB"/>
</dbReference>
<dbReference type="GO" id="GO:0003407">
    <property type="term" value="P:neural retina development"/>
    <property type="evidence" value="ECO:0007669"/>
    <property type="project" value="Ensembl"/>
</dbReference>
<dbReference type="GO" id="GO:0120162">
    <property type="term" value="P:positive regulation of cold-induced thermogenesis"/>
    <property type="evidence" value="ECO:0000250"/>
    <property type="project" value="YuBioLab"/>
</dbReference>
<dbReference type="GO" id="GO:0051726">
    <property type="term" value="P:regulation of cell cycle"/>
    <property type="evidence" value="ECO:0000250"/>
    <property type="project" value="UniProtKB"/>
</dbReference>
<dbReference type="GO" id="GO:0042752">
    <property type="term" value="P:regulation of circadian rhythm"/>
    <property type="evidence" value="ECO:0000250"/>
    <property type="project" value="UniProtKB"/>
</dbReference>
<dbReference type="GO" id="GO:0051946">
    <property type="term" value="P:regulation of glutamate uptake involved in transmission of nerve impulse"/>
    <property type="evidence" value="ECO:0000250"/>
    <property type="project" value="UniProtKB"/>
</dbReference>
<dbReference type="GO" id="GO:0050796">
    <property type="term" value="P:regulation of insulin secretion"/>
    <property type="evidence" value="ECO:0000250"/>
    <property type="project" value="UniProtKB"/>
</dbReference>
<dbReference type="GO" id="GO:0050767">
    <property type="term" value="P:regulation of neurogenesis"/>
    <property type="evidence" value="ECO:0000250"/>
    <property type="project" value="UniProtKB"/>
</dbReference>
<dbReference type="GO" id="GO:0019229">
    <property type="term" value="P:regulation of vasoconstriction"/>
    <property type="evidence" value="ECO:0000250"/>
    <property type="project" value="UniProtKB"/>
</dbReference>
<dbReference type="GO" id="GO:0002931">
    <property type="term" value="P:response to ischemia"/>
    <property type="evidence" value="ECO:0000250"/>
    <property type="project" value="UniProtKB"/>
</dbReference>
<dbReference type="GO" id="GO:0050872">
    <property type="term" value="P:white fat cell differentiation"/>
    <property type="evidence" value="ECO:0000250"/>
    <property type="project" value="UniProtKB"/>
</dbReference>
<dbReference type="CDD" id="cd00130">
    <property type="entry name" value="PAS"/>
    <property type="match status" value="1"/>
</dbReference>
<dbReference type="FunFam" id="3.30.450.20:FF:000013">
    <property type="entry name" value="Period circadian protein homolog 2"/>
    <property type="match status" value="1"/>
</dbReference>
<dbReference type="FunFam" id="3.30.450.20:FF:000004">
    <property type="entry name" value="Period circadian protein homolog 3"/>
    <property type="match status" value="1"/>
</dbReference>
<dbReference type="Gene3D" id="3.30.450.20">
    <property type="entry name" value="PAS domain"/>
    <property type="match status" value="2"/>
</dbReference>
<dbReference type="InterPro" id="IPR000014">
    <property type="entry name" value="PAS"/>
</dbReference>
<dbReference type="InterPro" id="IPR035965">
    <property type="entry name" value="PAS-like_dom_sf"/>
</dbReference>
<dbReference type="InterPro" id="IPR013655">
    <property type="entry name" value="PAS_fold_3"/>
</dbReference>
<dbReference type="InterPro" id="IPR048814">
    <property type="entry name" value="Per1-3_PAS-A"/>
</dbReference>
<dbReference type="InterPro" id="IPR022728">
    <property type="entry name" value="Period_circadian-like_C"/>
</dbReference>
<dbReference type="InterPro" id="IPR050760">
    <property type="entry name" value="Period_circadian_regulator"/>
</dbReference>
<dbReference type="PANTHER" id="PTHR11269">
    <property type="entry name" value="PERIOD CIRCADIAN PROTEIN"/>
    <property type="match status" value="1"/>
</dbReference>
<dbReference type="PANTHER" id="PTHR11269:SF9">
    <property type="entry name" value="PERIOD CIRCADIAN PROTEIN HOMOLOG 2"/>
    <property type="match status" value="1"/>
</dbReference>
<dbReference type="Pfam" id="PF23170">
    <property type="entry name" value="bHLH_PER"/>
    <property type="match status" value="1"/>
</dbReference>
<dbReference type="Pfam" id="PF08447">
    <property type="entry name" value="PAS_3"/>
    <property type="match status" value="1"/>
</dbReference>
<dbReference type="Pfam" id="PF21353">
    <property type="entry name" value="Per3-like_PAS-A"/>
    <property type="match status" value="1"/>
</dbReference>
<dbReference type="Pfam" id="PF12114">
    <property type="entry name" value="Period_C"/>
    <property type="match status" value="1"/>
</dbReference>
<dbReference type="SMART" id="SM00091">
    <property type="entry name" value="PAS"/>
    <property type="match status" value="2"/>
</dbReference>
<dbReference type="SUPFAM" id="SSF55785">
    <property type="entry name" value="PYP-like sensor domain (PAS domain)"/>
    <property type="match status" value="1"/>
</dbReference>
<dbReference type="PROSITE" id="PS50112">
    <property type="entry name" value="PAS"/>
    <property type="match status" value="1"/>
</dbReference>
<reference key="1">
    <citation type="submission" date="1998-03" db="EMBL/GenBank/DDBJ databases">
        <title>cDNA cloning and characterization of Per2S, an alternatively spliced human Per2 variant.</title>
        <authorList>
            <person name="Ikeda M."/>
            <person name="Takehara N."/>
            <person name="Ebisawa T."/>
            <person name="Yamauchi T."/>
            <person name="Nomura M."/>
        </authorList>
    </citation>
    <scope>NUCLEOTIDE SEQUENCE [MRNA] (ISOFORM 2)</scope>
    <source>
        <tissue>Brain</tissue>
    </source>
</reference>
<reference key="2">
    <citation type="journal article" date="2001" name="FEBS Lett.">
        <title>Human casein kinase Idelta phosphorylation of human circadian clock proteins period 1 and 2.</title>
        <authorList>
            <person name="Camacho F."/>
            <person name="Cilio M."/>
            <person name="Guo Y."/>
            <person name="Virshup D.M."/>
            <person name="Patel K."/>
            <person name="Khorkova O."/>
            <person name="Styren S."/>
            <person name="Morse B."/>
            <person name="Yao Z."/>
            <person name="Keesler G.A."/>
        </authorList>
    </citation>
    <scope>NUCLEOTIDE SEQUENCE [MRNA] (ISOFORM 1)</scope>
    <scope>PHOSPHORYLATION</scope>
    <scope>INTERACTION WITH CSNK1D</scope>
    <source>
        <tissue>Brain</tissue>
    </source>
</reference>
<reference key="3">
    <citation type="submission" date="2006-09" db="EMBL/GenBank/DDBJ databases">
        <authorList>
            <consortium name="NHLBI resequencing and genotyping service (RS&amp;G)"/>
        </authorList>
    </citation>
    <scope>NUCLEOTIDE SEQUENCE [GENOMIC DNA]</scope>
</reference>
<reference key="4">
    <citation type="journal article" date="1997" name="DNA Res.">
        <title>Prediction of the coding sequences of unidentified human genes. VII. The complete sequences of 100 new cDNA clones from brain which can code for large proteins in vitro.</title>
        <authorList>
            <person name="Nagase T."/>
            <person name="Ishikawa K."/>
            <person name="Nakajima D."/>
            <person name="Ohira M."/>
            <person name="Seki N."/>
            <person name="Miyajima N."/>
            <person name="Tanaka A."/>
            <person name="Kotani H."/>
            <person name="Nomura N."/>
            <person name="Ohara O."/>
        </authorList>
    </citation>
    <scope>NUCLEOTIDE SEQUENCE [LARGE SCALE MRNA] (ISOFORM 1)</scope>
    <source>
        <tissue>Brain</tissue>
    </source>
</reference>
<reference key="5">
    <citation type="submission" date="1999-12" db="EMBL/GenBank/DDBJ databases">
        <authorList>
            <person name="Nagase T."/>
            <person name="Ishikawa K."/>
            <person name="Seki N."/>
            <person name="Nakajima D."/>
            <person name="Ohira M."/>
            <person name="Miyajima N."/>
            <person name="Kotani H."/>
            <person name="Nomura N."/>
            <person name="Ohara O."/>
        </authorList>
    </citation>
    <scope>SEQUENCE REVISION TO C-TERMINUS</scope>
</reference>
<reference key="6">
    <citation type="journal article" date="2005" name="Nature">
        <title>Generation and annotation of the DNA sequences of human chromosomes 2 and 4.</title>
        <authorList>
            <person name="Hillier L.W."/>
            <person name="Graves T.A."/>
            <person name="Fulton R.S."/>
            <person name="Fulton L.A."/>
            <person name="Pepin K.H."/>
            <person name="Minx P."/>
            <person name="Wagner-McPherson C."/>
            <person name="Layman D."/>
            <person name="Wylie K."/>
            <person name="Sekhon M."/>
            <person name="Becker M.C."/>
            <person name="Fewell G.A."/>
            <person name="Delehaunty K.D."/>
            <person name="Miner T.L."/>
            <person name="Nash W.E."/>
            <person name="Kremitzki C."/>
            <person name="Oddy L."/>
            <person name="Du H."/>
            <person name="Sun H."/>
            <person name="Bradshaw-Cordum H."/>
            <person name="Ali J."/>
            <person name="Carter J."/>
            <person name="Cordes M."/>
            <person name="Harris A."/>
            <person name="Isak A."/>
            <person name="van Brunt A."/>
            <person name="Nguyen C."/>
            <person name="Du F."/>
            <person name="Courtney L."/>
            <person name="Kalicki J."/>
            <person name="Ozersky P."/>
            <person name="Abbott S."/>
            <person name="Armstrong J."/>
            <person name="Belter E.A."/>
            <person name="Caruso L."/>
            <person name="Cedroni M."/>
            <person name="Cotton M."/>
            <person name="Davidson T."/>
            <person name="Desai A."/>
            <person name="Elliott G."/>
            <person name="Erb T."/>
            <person name="Fronick C."/>
            <person name="Gaige T."/>
            <person name="Haakenson W."/>
            <person name="Haglund K."/>
            <person name="Holmes A."/>
            <person name="Harkins R."/>
            <person name="Kim K."/>
            <person name="Kruchowski S.S."/>
            <person name="Strong C.M."/>
            <person name="Grewal N."/>
            <person name="Goyea E."/>
            <person name="Hou S."/>
            <person name="Levy A."/>
            <person name="Martinka S."/>
            <person name="Mead K."/>
            <person name="McLellan M.D."/>
            <person name="Meyer R."/>
            <person name="Randall-Maher J."/>
            <person name="Tomlinson C."/>
            <person name="Dauphin-Kohlberg S."/>
            <person name="Kozlowicz-Reilly A."/>
            <person name="Shah N."/>
            <person name="Swearengen-Shahid S."/>
            <person name="Snider J."/>
            <person name="Strong J.T."/>
            <person name="Thompson J."/>
            <person name="Yoakum M."/>
            <person name="Leonard S."/>
            <person name="Pearman C."/>
            <person name="Trani L."/>
            <person name="Radionenko M."/>
            <person name="Waligorski J.E."/>
            <person name="Wang C."/>
            <person name="Rock S.M."/>
            <person name="Tin-Wollam A.-M."/>
            <person name="Maupin R."/>
            <person name="Latreille P."/>
            <person name="Wendl M.C."/>
            <person name="Yang S.-P."/>
            <person name="Pohl C."/>
            <person name="Wallis J.W."/>
            <person name="Spieth J."/>
            <person name="Bieri T.A."/>
            <person name="Berkowicz N."/>
            <person name="Nelson J.O."/>
            <person name="Osborne J."/>
            <person name="Ding L."/>
            <person name="Meyer R."/>
            <person name="Sabo A."/>
            <person name="Shotland Y."/>
            <person name="Sinha P."/>
            <person name="Wohldmann P.E."/>
            <person name="Cook L.L."/>
            <person name="Hickenbotham M.T."/>
            <person name="Eldred J."/>
            <person name="Williams D."/>
            <person name="Jones T.A."/>
            <person name="She X."/>
            <person name="Ciccarelli F.D."/>
            <person name="Izaurralde E."/>
            <person name="Taylor J."/>
            <person name="Schmutz J."/>
            <person name="Myers R.M."/>
            <person name="Cox D.R."/>
            <person name="Huang X."/>
            <person name="McPherson J.D."/>
            <person name="Mardis E.R."/>
            <person name="Clifton S.W."/>
            <person name="Warren W.C."/>
            <person name="Chinwalla A.T."/>
            <person name="Eddy S.R."/>
            <person name="Marra M.A."/>
            <person name="Ovcharenko I."/>
            <person name="Furey T.S."/>
            <person name="Miller W."/>
            <person name="Eichler E.E."/>
            <person name="Bork P."/>
            <person name="Suyama M."/>
            <person name="Torrents D."/>
            <person name="Waterston R.H."/>
            <person name="Wilson R.K."/>
        </authorList>
    </citation>
    <scope>NUCLEOTIDE SEQUENCE [LARGE SCALE GENOMIC DNA]</scope>
</reference>
<reference key="7">
    <citation type="submission" date="2005-07" db="EMBL/GenBank/DDBJ databases">
        <authorList>
            <person name="Mural R.J."/>
            <person name="Istrail S."/>
            <person name="Sutton G.G."/>
            <person name="Florea L."/>
            <person name="Halpern A.L."/>
            <person name="Mobarry C.M."/>
            <person name="Lippert R."/>
            <person name="Walenz B."/>
            <person name="Shatkay H."/>
            <person name="Dew I."/>
            <person name="Miller J.R."/>
            <person name="Flanigan M.J."/>
            <person name="Edwards N.J."/>
            <person name="Bolanos R."/>
            <person name="Fasulo D."/>
            <person name="Halldorsson B.V."/>
            <person name="Hannenhalli S."/>
            <person name="Turner R."/>
            <person name="Yooseph S."/>
            <person name="Lu F."/>
            <person name="Nusskern D.R."/>
            <person name="Shue B.C."/>
            <person name="Zheng X.H."/>
            <person name="Zhong F."/>
            <person name="Delcher A.L."/>
            <person name="Huson D.H."/>
            <person name="Kravitz S.A."/>
            <person name="Mouchard L."/>
            <person name="Reinert K."/>
            <person name="Remington K.A."/>
            <person name="Clark A.G."/>
            <person name="Waterman M.S."/>
            <person name="Eichler E.E."/>
            <person name="Adams M.D."/>
            <person name="Hunkapiller M.W."/>
            <person name="Myers E.W."/>
            <person name="Venter J.C."/>
        </authorList>
    </citation>
    <scope>NUCLEOTIDE SEQUENCE [LARGE SCALE GENOMIC DNA]</scope>
</reference>
<reference key="8">
    <citation type="submission" date="2004-06" db="EMBL/GenBank/DDBJ databases">
        <title>A single-nucleotide polymorphism in the 5'-untranslated region of the hPER2 gene is associated with diurnal preference.</title>
        <authorList>
            <person name="Carpen J.D."/>
            <person name="Archer S.N."/>
            <person name="Skene D.J."/>
            <person name="Smits M."/>
            <person name="von Schantz M."/>
        </authorList>
    </citation>
    <scope>NUCLEOTIDE SEQUENCE [GENOMIC DNA] OF 1-65</scope>
</reference>
<reference key="9">
    <citation type="journal article" date="1997" name="Neuron">
        <title>Two period homologs: circadian expression and photic regulation in the suprachiasmatic nuclei.</title>
        <authorList>
            <person name="Shearman L.P."/>
            <person name="Zylka M.J."/>
            <person name="Weaver D.R."/>
            <person name="Kolakowski L.F. Jr."/>
            <person name="Reppert S.M."/>
        </authorList>
    </citation>
    <scope>TISSUE SPECIFICITY</scope>
</reference>
<reference key="10">
    <citation type="journal article" date="2004" name="Biochem. J.">
        <title>Phosphorylation of clock protein PER1 regulates its circadian degradation in normal human fibroblasts.</title>
        <authorList>
            <person name="Miyazaki K."/>
            <person name="Nagase T."/>
            <person name="Mesaki M."/>
            <person name="Narukawa J."/>
            <person name="Ohara O."/>
            <person name="Ishida N."/>
        </authorList>
    </citation>
    <scope>INDUCTION</scope>
</reference>
<reference key="11">
    <citation type="journal article" date="2012" name="EMBO J.">
        <title>PML regulates PER2 nuclear localization and circadian function.</title>
        <authorList>
            <person name="Miki T."/>
            <person name="Xu Z."/>
            <person name="Chen-Goodspeed M."/>
            <person name="Liu M."/>
            <person name="Van Oort-Jansen A."/>
            <person name="Rea M.A."/>
            <person name="Zhao Z."/>
            <person name="Lee C.C."/>
            <person name="Chang K.S."/>
        </authorList>
    </citation>
    <scope>SUBCELLULAR LOCATION</scope>
    <scope>INTERACTION WITH PML</scope>
</reference>
<reference key="12">
    <citation type="journal article" date="2014" name="Cell. Mol. Life Sci.">
        <title>Nucleolar localization and circadian regulation of Per2S, a novel splicing variant of the Period 2 gene.</title>
        <authorList>
            <person name="Avitabile D."/>
            <person name="Genovese L."/>
            <person name="Ponti D."/>
            <person name="Ranieri D."/>
            <person name="Raffa S."/>
            <person name="Calogero A."/>
            <person name="Torrisi M.R."/>
        </authorList>
    </citation>
    <scope>ALTERNATIVE SPLICING (ISOFORM 2)</scope>
    <scope>SUBCELLULAR LOCATION (ISOFORM 2)</scope>
    <scope>TISSUE SPECIFICITY (ISOFORM 2)</scope>
</reference>
<reference key="13">
    <citation type="journal article" date="2013" name="Physiol. Rev.">
        <title>Metabolism and the circadian clock converge.</title>
        <authorList>
            <person name="Eckel-Mahan K."/>
            <person name="Sassone-Corsi P."/>
        </authorList>
    </citation>
    <scope>REVIEW</scope>
</reference>
<reference key="14">
    <citation type="journal article" date="2014" name="Trends Cell Biol.">
        <title>Molecular architecture of the mammalian circadian clock.</title>
        <authorList>
            <person name="Partch C.L."/>
            <person name="Green C.B."/>
            <person name="Takahashi J.S."/>
        </authorList>
    </citation>
    <scope>REVIEW</scope>
</reference>
<reference key="15">
    <citation type="journal article" date="2018" name="Proc. Natl. Acad. Sci. U.S.A.">
        <title>Nuclear receptor HNF4A transrepresses CLOCK:BMAL1 and modulates tissue-specific circadian networks.</title>
        <authorList>
            <person name="Qu M."/>
            <person name="Duffy T."/>
            <person name="Hirota T."/>
            <person name="Kay S.A."/>
        </authorList>
    </citation>
    <scope>INTERACTION WITH HNF4A</scope>
</reference>
<reference key="16">
    <citation type="journal article" date="2019" name="Proc. Natl. Acad. Sci. U.S.A.">
        <title>TIMELESS mutation alters phase responsiveness and causes advanced sleep phase.</title>
        <authorList>
            <person name="Kurien P."/>
            <person name="Hsu P.K."/>
            <person name="Leon J."/>
            <person name="Wu D."/>
            <person name="McMahon T."/>
            <person name="Shi G."/>
            <person name="Xu Y."/>
            <person name="Lipzen A."/>
            <person name="Pennacchio L.A."/>
            <person name="Jones C.R."/>
            <person name="Fu Y.H."/>
            <person name="Ptacek L.J."/>
        </authorList>
    </citation>
    <scope>INTERACTION WITH TIMELESS</scope>
</reference>
<reference key="17">
    <citation type="journal article" date="2001" name="Science">
        <title>An hPer2 phosphorylation site mutation in familial advanced sleep phase syndrome.</title>
        <authorList>
            <person name="Toh K.L."/>
            <person name="Jones C.R."/>
            <person name="He Y."/>
            <person name="Eide E.J."/>
            <person name="Hinz W.A."/>
            <person name="Virshup D.M."/>
            <person name="Ptacek L.J."/>
            <person name="Fu Y.-H."/>
        </authorList>
    </citation>
    <scope>VARIANT FASPS1 GLY-662</scope>
    <scope>PHOSPHORYLATION AT SER-662</scope>
    <scope>MUTAGENESIS OF SER-662</scope>
</reference>
<reference key="18">
    <citation type="journal article" date="2006" name="Science">
        <title>The consensus coding sequences of human breast and colorectal cancers.</title>
        <authorList>
            <person name="Sjoeblom T."/>
            <person name="Jones S."/>
            <person name="Wood L.D."/>
            <person name="Parsons D.W."/>
            <person name="Lin J."/>
            <person name="Barber T.D."/>
            <person name="Mandelker D."/>
            <person name="Leary R.J."/>
            <person name="Ptak J."/>
            <person name="Silliman N."/>
            <person name="Szabo S."/>
            <person name="Buckhaults P."/>
            <person name="Farrell C."/>
            <person name="Meeh P."/>
            <person name="Markowitz S.D."/>
            <person name="Willis J."/>
            <person name="Dawson D."/>
            <person name="Willson J.K.V."/>
            <person name="Gazdar A.F."/>
            <person name="Hartigan J."/>
            <person name="Wu L."/>
            <person name="Liu C."/>
            <person name="Parmigiani G."/>
            <person name="Park B.H."/>
            <person name="Bachman K.E."/>
            <person name="Papadopoulos N."/>
            <person name="Vogelstein B."/>
            <person name="Kinzler K.W."/>
            <person name="Velculescu V.E."/>
        </authorList>
    </citation>
    <scope>VARIANT [LARGE SCALE ANALYSIS] VAL-823</scope>
</reference>
<name>PER2_HUMAN</name>
<proteinExistence type="evidence at protein level"/>